<proteinExistence type="inferred from homology"/>
<organism>
    <name type="scientific">Salmonella dublin (strain CT_02021853)</name>
    <dbReference type="NCBI Taxonomy" id="439851"/>
    <lineage>
        <taxon>Bacteria</taxon>
        <taxon>Pseudomonadati</taxon>
        <taxon>Pseudomonadota</taxon>
        <taxon>Gammaproteobacteria</taxon>
        <taxon>Enterobacterales</taxon>
        <taxon>Enterobacteriaceae</taxon>
        <taxon>Salmonella</taxon>
    </lineage>
</organism>
<gene>
    <name evidence="1" type="primary">cbiD</name>
    <name type="ordered locus">SeD_A2367</name>
</gene>
<protein>
    <recommendedName>
        <fullName evidence="1">Cobalt-precorrin-5B C(1)-methyltransferase</fullName>
        <ecNumber evidence="1">2.1.1.195</ecNumber>
    </recommendedName>
    <alternativeName>
        <fullName evidence="1">Cobalt-precorrin-6A synthase</fullName>
    </alternativeName>
</protein>
<comment type="function">
    <text evidence="1">Catalyzes the methylation of C-1 in cobalt-precorrin-5B to form cobalt-precorrin-6A.</text>
</comment>
<comment type="catalytic activity">
    <reaction evidence="1">
        <text>Co-precorrin-5B + S-adenosyl-L-methionine = Co-precorrin-6A + S-adenosyl-L-homocysteine</text>
        <dbReference type="Rhea" id="RHEA:26285"/>
        <dbReference type="ChEBI" id="CHEBI:57856"/>
        <dbReference type="ChEBI" id="CHEBI:59789"/>
        <dbReference type="ChEBI" id="CHEBI:60063"/>
        <dbReference type="ChEBI" id="CHEBI:60064"/>
        <dbReference type="EC" id="2.1.1.195"/>
    </reaction>
</comment>
<comment type="pathway">
    <text evidence="1">Cofactor biosynthesis; adenosylcobalamin biosynthesis; cob(II)yrinate a,c-diamide from sirohydrochlorin (anaerobic route): step 6/10.</text>
</comment>
<comment type="similarity">
    <text evidence="1">Belongs to the CbiD family.</text>
</comment>
<sequence>MSELSFDAPVWHHGKALRKGYTTGSCATAAAKVAALMVLRQHLIHQVSIVTPSGVTLCLNVESPHIEGQQAIAAIRKDGGDDVDATHGMLIFARVTLNDSGEITLTGGEGIGTVTRKGIGLPLGSAAINRTPRHTIESAVREAIGPARGADVEIFAPEGEVRAQKTYNSRLGILGGISIIGTTGIVTPMSEESWKRSLSLELEIKRASGLTRVILVPGNHGERFVREQMGVDTQAVVTMSNFVGYMIEEAVRLGFCQIVLVGHPGKLIKIAAGIFHTHSHIADARMETLVAHLALLGAPLELLTLVGDCDTTEAAMEHIEAYGFGHIYNHLARRICLRVMQMLRFTKTPPVCDAILFSFDNHILGSNRPVDEIAKELQC</sequence>
<reference key="1">
    <citation type="journal article" date="2011" name="J. Bacteriol.">
        <title>Comparative genomics of 28 Salmonella enterica isolates: evidence for CRISPR-mediated adaptive sublineage evolution.</title>
        <authorList>
            <person name="Fricke W.F."/>
            <person name="Mammel M.K."/>
            <person name="McDermott P.F."/>
            <person name="Tartera C."/>
            <person name="White D.G."/>
            <person name="Leclerc J.E."/>
            <person name="Ravel J."/>
            <person name="Cebula T.A."/>
        </authorList>
    </citation>
    <scope>NUCLEOTIDE SEQUENCE [LARGE SCALE GENOMIC DNA]</scope>
    <source>
        <strain>CT_02021853</strain>
    </source>
</reference>
<evidence type="ECO:0000255" key="1">
    <source>
        <dbReference type="HAMAP-Rule" id="MF_00787"/>
    </source>
</evidence>
<dbReference type="EC" id="2.1.1.195" evidence="1"/>
<dbReference type="EMBL" id="CP001144">
    <property type="protein sequence ID" value="ACH76807.1"/>
    <property type="molecule type" value="Genomic_DNA"/>
</dbReference>
<dbReference type="RefSeq" id="WP_001292910.1">
    <property type="nucleotide sequence ID" value="NC_011205.1"/>
</dbReference>
<dbReference type="SMR" id="B5FM00"/>
<dbReference type="KEGG" id="sed:SeD_A2367"/>
<dbReference type="HOGENOM" id="CLU_041273_1_0_6"/>
<dbReference type="UniPathway" id="UPA00148">
    <property type="reaction ID" value="UER00227"/>
</dbReference>
<dbReference type="Proteomes" id="UP000008322">
    <property type="component" value="Chromosome"/>
</dbReference>
<dbReference type="GO" id="GO:0043780">
    <property type="term" value="F:cobalt-precorrin-5B C1-methyltransferase activity"/>
    <property type="evidence" value="ECO:0007669"/>
    <property type="project" value="RHEA"/>
</dbReference>
<dbReference type="GO" id="GO:0019251">
    <property type="term" value="P:anaerobic cobalamin biosynthetic process"/>
    <property type="evidence" value="ECO:0007669"/>
    <property type="project" value="UniProtKB-UniRule"/>
</dbReference>
<dbReference type="GO" id="GO:0032259">
    <property type="term" value="P:methylation"/>
    <property type="evidence" value="ECO:0007669"/>
    <property type="project" value="UniProtKB-KW"/>
</dbReference>
<dbReference type="Gene3D" id="3.30.2110.10">
    <property type="entry name" value="CbiD-like"/>
    <property type="match status" value="1"/>
</dbReference>
<dbReference type="HAMAP" id="MF_00787">
    <property type="entry name" value="CbiD"/>
    <property type="match status" value="1"/>
</dbReference>
<dbReference type="InterPro" id="IPR002748">
    <property type="entry name" value="CbiD"/>
</dbReference>
<dbReference type="InterPro" id="IPR036074">
    <property type="entry name" value="CbiD_sf"/>
</dbReference>
<dbReference type="NCBIfam" id="TIGR00312">
    <property type="entry name" value="cbiD"/>
    <property type="match status" value="1"/>
</dbReference>
<dbReference type="PANTHER" id="PTHR35863">
    <property type="entry name" value="COBALT-PRECORRIN-5B C(1)-METHYLTRANSFERASE"/>
    <property type="match status" value="1"/>
</dbReference>
<dbReference type="PANTHER" id="PTHR35863:SF1">
    <property type="entry name" value="COBALT-PRECORRIN-5B C(1)-METHYLTRANSFERASE"/>
    <property type="match status" value="1"/>
</dbReference>
<dbReference type="Pfam" id="PF01888">
    <property type="entry name" value="CbiD"/>
    <property type="match status" value="1"/>
</dbReference>
<dbReference type="PIRSF" id="PIRSF026782">
    <property type="entry name" value="CbiD"/>
    <property type="match status" value="1"/>
</dbReference>
<dbReference type="SUPFAM" id="SSF111342">
    <property type="entry name" value="CbiD-like"/>
    <property type="match status" value="1"/>
</dbReference>
<keyword id="KW-0169">Cobalamin biosynthesis</keyword>
<keyword id="KW-0489">Methyltransferase</keyword>
<keyword id="KW-0949">S-adenosyl-L-methionine</keyword>
<keyword id="KW-0808">Transferase</keyword>
<accession>B5FM00</accession>
<name>CBID_SALDC</name>
<feature type="chain" id="PRO_1000133743" description="Cobalt-precorrin-5B C(1)-methyltransferase">
    <location>
        <begin position="1"/>
        <end position="379"/>
    </location>
</feature>